<evidence type="ECO:0000255" key="1">
    <source>
        <dbReference type="HAMAP-Rule" id="MF_01367"/>
    </source>
</evidence>
<evidence type="ECO:0000305" key="2"/>
<name>RL14_BACTN</name>
<dbReference type="EMBL" id="AE015928">
    <property type="protein sequence ID" value="AAO77823.1"/>
    <property type="molecule type" value="Genomic_DNA"/>
</dbReference>
<dbReference type="RefSeq" id="NP_811629.1">
    <property type="nucleotide sequence ID" value="NC_004663.1"/>
</dbReference>
<dbReference type="RefSeq" id="WP_004296340.1">
    <property type="nucleotide sequence ID" value="NZ_UYXG01000001.1"/>
</dbReference>
<dbReference type="SMR" id="Q8A486"/>
<dbReference type="FunCoup" id="Q8A486">
    <property type="interactions" value="588"/>
</dbReference>
<dbReference type="STRING" id="226186.BT_2717"/>
<dbReference type="PaxDb" id="226186-BT_2717"/>
<dbReference type="EnsemblBacteria" id="AAO77823">
    <property type="protein sequence ID" value="AAO77823"/>
    <property type="gene ID" value="BT_2717"/>
</dbReference>
<dbReference type="GeneID" id="93105314"/>
<dbReference type="KEGG" id="bth:BT_2717"/>
<dbReference type="PATRIC" id="fig|226186.12.peg.2760"/>
<dbReference type="eggNOG" id="COG0093">
    <property type="taxonomic scope" value="Bacteria"/>
</dbReference>
<dbReference type="HOGENOM" id="CLU_095071_2_1_10"/>
<dbReference type="InParanoid" id="Q8A486"/>
<dbReference type="OrthoDB" id="9806379at2"/>
<dbReference type="Proteomes" id="UP000001414">
    <property type="component" value="Chromosome"/>
</dbReference>
<dbReference type="GO" id="GO:0022625">
    <property type="term" value="C:cytosolic large ribosomal subunit"/>
    <property type="evidence" value="ECO:0000318"/>
    <property type="project" value="GO_Central"/>
</dbReference>
<dbReference type="GO" id="GO:0070180">
    <property type="term" value="F:large ribosomal subunit rRNA binding"/>
    <property type="evidence" value="ECO:0000318"/>
    <property type="project" value="GO_Central"/>
</dbReference>
<dbReference type="GO" id="GO:0003735">
    <property type="term" value="F:structural constituent of ribosome"/>
    <property type="evidence" value="ECO:0000318"/>
    <property type="project" value="GO_Central"/>
</dbReference>
<dbReference type="GO" id="GO:0006412">
    <property type="term" value="P:translation"/>
    <property type="evidence" value="ECO:0007669"/>
    <property type="project" value="UniProtKB-UniRule"/>
</dbReference>
<dbReference type="CDD" id="cd00337">
    <property type="entry name" value="Ribosomal_uL14"/>
    <property type="match status" value="1"/>
</dbReference>
<dbReference type="FunFam" id="2.40.150.20:FF:000001">
    <property type="entry name" value="50S ribosomal protein L14"/>
    <property type="match status" value="1"/>
</dbReference>
<dbReference type="Gene3D" id="2.40.150.20">
    <property type="entry name" value="Ribosomal protein L14"/>
    <property type="match status" value="1"/>
</dbReference>
<dbReference type="HAMAP" id="MF_01367">
    <property type="entry name" value="Ribosomal_uL14"/>
    <property type="match status" value="1"/>
</dbReference>
<dbReference type="InterPro" id="IPR000218">
    <property type="entry name" value="Ribosomal_uL14"/>
</dbReference>
<dbReference type="InterPro" id="IPR005745">
    <property type="entry name" value="Ribosomal_uL14_bac-type"/>
</dbReference>
<dbReference type="InterPro" id="IPR019972">
    <property type="entry name" value="Ribosomal_uL14_CS"/>
</dbReference>
<dbReference type="InterPro" id="IPR036853">
    <property type="entry name" value="Ribosomal_uL14_sf"/>
</dbReference>
<dbReference type="NCBIfam" id="TIGR01067">
    <property type="entry name" value="rplN_bact"/>
    <property type="match status" value="1"/>
</dbReference>
<dbReference type="PANTHER" id="PTHR11761">
    <property type="entry name" value="50S/60S RIBOSOMAL PROTEIN L14/L23"/>
    <property type="match status" value="1"/>
</dbReference>
<dbReference type="PANTHER" id="PTHR11761:SF3">
    <property type="entry name" value="LARGE RIBOSOMAL SUBUNIT PROTEIN UL14M"/>
    <property type="match status" value="1"/>
</dbReference>
<dbReference type="Pfam" id="PF00238">
    <property type="entry name" value="Ribosomal_L14"/>
    <property type="match status" value="1"/>
</dbReference>
<dbReference type="SMART" id="SM01374">
    <property type="entry name" value="Ribosomal_L14"/>
    <property type="match status" value="1"/>
</dbReference>
<dbReference type="SUPFAM" id="SSF50193">
    <property type="entry name" value="Ribosomal protein L14"/>
    <property type="match status" value="1"/>
</dbReference>
<dbReference type="PROSITE" id="PS00049">
    <property type="entry name" value="RIBOSOMAL_L14"/>
    <property type="match status" value="1"/>
</dbReference>
<feature type="chain" id="PRO_1000055519" description="Large ribosomal subunit protein uL14">
    <location>
        <begin position="1"/>
        <end position="121"/>
    </location>
</feature>
<organism>
    <name type="scientific">Bacteroides thetaiotaomicron (strain ATCC 29148 / DSM 2079 / JCM 5827 / CCUG 10774 / NCTC 10582 / VPI-5482 / E50)</name>
    <dbReference type="NCBI Taxonomy" id="226186"/>
    <lineage>
        <taxon>Bacteria</taxon>
        <taxon>Pseudomonadati</taxon>
        <taxon>Bacteroidota</taxon>
        <taxon>Bacteroidia</taxon>
        <taxon>Bacteroidales</taxon>
        <taxon>Bacteroidaceae</taxon>
        <taxon>Bacteroides</taxon>
    </lineage>
</organism>
<comment type="function">
    <text evidence="1">Binds to 23S rRNA. Forms part of two intersubunit bridges in the 70S ribosome.</text>
</comment>
<comment type="subunit">
    <text evidence="1">Part of the 50S ribosomal subunit. Forms a cluster with proteins L3 and L19. In the 70S ribosome, L14 and L19 interact and together make contacts with the 16S rRNA in bridges B5 and B8.</text>
</comment>
<comment type="similarity">
    <text evidence="1">Belongs to the universal ribosomal protein uL14 family.</text>
</comment>
<reference key="1">
    <citation type="journal article" date="2003" name="Science">
        <title>A genomic view of the human-Bacteroides thetaiotaomicron symbiosis.</title>
        <authorList>
            <person name="Xu J."/>
            <person name="Bjursell M.K."/>
            <person name="Himrod J."/>
            <person name="Deng S."/>
            <person name="Carmichael L.K."/>
            <person name="Chiang H.C."/>
            <person name="Hooper L.V."/>
            <person name="Gordon J.I."/>
        </authorList>
    </citation>
    <scope>NUCLEOTIDE SEQUENCE [LARGE SCALE GENOMIC DNA]</scope>
    <source>
        <strain>ATCC 29148 / DSM 2079 / JCM 5827 / CCUG 10774 / NCTC 10582 / VPI-5482 / E50</strain>
    </source>
</reference>
<proteinExistence type="inferred from homology"/>
<protein>
    <recommendedName>
        <fullName evidence="1">Large ribosomal subunit protein uL14</fullName>
    </recommendedName>
    <alternativeName>
        <fullName evidence="2">50S ribosomal protein L14</fullName>
    </alternativeName>
</protein>
<accession>Q8A486</accession>
<gene>
    <name evidence="1" type="primary">rplN</name>
    <name type="ordered locus">BT_2717</name>
</gene>
<sequence>MIQVESRLTVCDNSGAKEALCIRVLGGTGRRYASVGDVIVVSVKSVIPSSDVKKGAVSKALIVRTKKEIRRPDGSYIRFDDNACVLLNNAGEIRGSRIFGPVARELRATNMKVVSLAPEVL</sequence>
<keyword id="KW-1185">Reference proteome</keyword>
<keyword id="KW-0687">Ribonucleoprotein</keyword>
<keyword id="KW-0689">Ribosomal protein</keyword>
<keyword id="KW-0694">RNA-binding</keyword>
<keyword id="KW-0699">rRNA-binding</keyword>